<dbReference type="EC" id="6.3.5.-" evidence="1"/>
<dbReference type="EMBL" id="BA000040">
    <property type="protein sequence ID" value="BAC50352.1"/>
    <property type="molecule type" value="Genomic_DNA"/>
</dbReference>
<dbReference type="RefSeq" id="NP_771727.1">
    <property type="nucleotide sequence ID" value="NC_004463.1"/>
</dbReference>
<dbReference type="RefSeq" id="WP_011087847.1">
    <property type="nucleotide sequence ID" value="NC_004463.1"/>
</dbReference>
<dbReference type="SMR" id="Q89K31"/>
<dbReference type="STRING" id="224911.AAV28_22795"/>
<dbReference type="EnsemblBacteria" id="BAC50352">
    <property type="protein sequence ID" value="BAC50352"/>
    <property type="gene ID" value="BAC50352"/>
</dbReference>
<dbReference type="GeneID" id="46492091"/>
<dbReference type="KEGG" id="bja:bll5087"/>
<dbReference type="PATRIC" id="fig|224911.44.peg.4954"/>
<dbReference type="eggNOG" id="COG0064">
    <property type="taxonomic scope" value="Bacteria"/>
</dbReference>
<dbReference type="HOGENOM" id="CLU_019240_0_0_5"/>
<dbReference type="InParanoid" id="Q89K31"/>
<dbReference type="OrthoDB" id="9804078at2"/>
<dbReference type="PhylomeDB" id="Q89K31"/>
<dbReference type="Proteomes" id="UP000002526">
    <property type="component" value="Chromosome"/>
</dbReference>
<dbReference type="GO" id="GO:0050566">
    <property type="term" value="F:asparaginyl-tRNA synthase (glutamine-hydrolyzing) activity"/>
    <property type="evidence" value="ECO:0007669"/>
    <property type="project" value="RHEA"/>
</dbReference>
<dbReference type="GO" id="GO:0005524">
    <property type="term" value="F:ATP binding"/>
    <property type="evidence" value="ECO:0007669"/>
    <property type="project" value="UniProtKB-KW"/>
</dbReference>
<dbReference type="GO" id="GO:0050567">
    <property type="term" value="F:glutaminyl-tRNA synthase (glutamine-hydrolyzing) activity"/>
    <property type="evidence" value="ECO:0000318"/>
    <property type="project" value="GO_Central"/>
</dbReference>
<dbReference type="GO" id="GO:0070681">
    <property type="term" value="P:glutaminyl-tRNAGln biosynthesis via transamidation"/>
    <property type="evidence" value="ECO:0000318"/>
    <property type="project" value="GO_Central"/>
</dbReference>
<dbReference type="GO" id="GO:0006412">
    <property type="term" value="P:translation"/>
    <property type="evidence" value="ECO:0007669"/>
    <property type="project" value="UniProtKB-UniRule"/>
</dbReference>
<dbReference type="FunFam" id="1.10.10.410:FF:000001">
    <property type="entry name" value="Aspartyl/glutamyl-tRNA(Asn/Gln) amidotransferase subunit B"/>
    <property type="match status" value="1"/>
</dbReference>
<dbReference type="FunFam" id="1.10.150.380:FF:000001">
    <property type="entry name" value="Aspartyl/glutamyl-tRNA(Asn/Gln) amidotransferase subunit B"/>
    <property type="match status" value="1"/>
</dbReference>
<dbReference type="Gene3D" id="1.10.10.410">
    <property type="match status" value="1"/>
</dbReference>
<dbReference type="Gene3D" id="1.10.150.380">
    <property type="entry name" value="GatB domain, N-terminal subdomain"/>
    <property type="match status" value="1"/>
</dbReference>
<dbReference type="HAMAP" id="MF_00121">
    <property type="entry name" value="GatB"/>
    <property type="match status" value="1"/>
</dbReference>
<dbReference type="InterPro" id="IPR017959">
    <property type="entry name" value="Asn/Gln-tRNA_amidoTrfase_suB/E"/>
</dbReference>
<dbReference type="InterPro" id="IPR006075">
    <property type="entry name" value="Asn/Gln-tRNA_Trfase_suB/E_cat"/>
</dbReference>
<dbReference type="InterPro" id="IPR018027">
    <property type="entry name" value="Asn/Gln_amidotransferase"/>
</dbReference>
<dbReference type="InterPro" id="IPR003789">
    <property type="entry name" value="Asn/Gln_tRNA_amidoTrase-B-like"/>
</dbReference>
<dbReference type="InterPro" id="IPR004413">
    <property type="entry name" value="GatB"/>
</dbReference>
<dbReference type="InterPro" id="IPR042114">
    <property type="entry name" value="GatB_C_1"/>
</dbReference>
<dbReference type="InterPro" id="IPR023168">
    <property type="entry name" value="GatB_Yqey_C_2"/>
</dbReference>
<dbReference type="InterPro" id="IPR017958">
    <property type="entry name" value="Gln-tRNA_amidoTrfase_suB_CS"/>
</dbReference>
<dbReference type="InterPro" id="IPR014746">
    <property type="entry name" value="Gln_synth/guanido_kin_cat_dom"/>
</dbReference>
<dbReference type="NCBIfam" id="TIGR00133">
    <property type="entry name" value="gatB"/>
    <property type="match status" value="1"/>
</dbReference>
<dbReference type="NCBIfam" id="NF004012">
    <property type="entry name" value="PRK05477.1-2"/>
    <property type="match status" value="1"/>
</dbReference>
<dbReference type="NCBIfam" id="NF004014">
    <property type="entry name" value="PRK05477.1-4"/>
    <property type="match status" value="1"/>
</dbReference>
<dbReference type="NCBIfam" id="NF004015">
    <property type="entry name" value="PRK05477.1-5"/>
    <property type="match status" value="1"/>
</dbReference>
<dbReference type="PANTHER" id="PTHR11659">
    <property type="entry name" value="GLUTAMYL-TRNA GLN AMIDOTRANSFERASE SUBUNIT B MITOCHONDRIAL AND PROKARYOTIC PET112-RELATED"/>
    <property type="match status" value="1"/>
</dbReference>
<dbReference type="PANTHER" id="PTHR11659:SF0">
    <property type="entry name" value="GLUTAMYL-TRNA(GLN) AMIDOTRANSFERASE SUBUNIT B, MITOCHONDRIAL"/>
    <property type="match status" value="1"/>
</dbReference>
<dbReference type="Pfam" id="PF02934">
    <property type="entry name" value="GatB_N"/>
    <property type="match status" value="1"/>
</dbReference>
<dbReference type="Pfam" id="PF02637">
    <property type="entry name" value="GatB_Yqey"/>
    <property type="match status" value="1"/>
</dbReference>
<dbReference type="SMART" id="SM00845">
    <property type="entry name" value="GatB_Yqey"/>
    <property type="match status" value="1"/>
</dbReference>
<dbReference type="SUPFAM" id="SSF89095">
    <property type="entry name" value="GatB/YqeY motif"/>
    <property type="match status" value="1"/>
</dbReference>
<dbReference type="SUPFAM" id="SSF55931">
    <property type="entry name" value="Glutamine synthetase/guanido kinase"/>
    <property type="match status" value="1"/>
</dbReference>
<dbReference type="PROSITE" id="PS01234">
    <property type="entry name" value="GATB"/>
    <property type="match status" value="1"/>
</dbReference>
<proteinExistence type="inferred from homology"/>
<gene>
    <name evidence="1" type="primary">gatB</name>
    <name type="ordered locus">bll5087</name>
</gene>
<evidence type="ECO:0000255" key="1">
    <source>
        <dbReference type="HAMAP-Rule" id="MF_00121"/>
    </source>
</evidence>
<protein>
    <recommendedName>
        <fullName evidence="1">Aspartyl/glutamyl-tRNA(Asn/Gln) amidotransferase subunit B</fullName>
        <shortName evidence="1">Asp/Glu-ADT subunit B</shortName>
        <ecNumber evidence="1">6.3.5.-</ecNumber>
    </recommendedName>
</protein>
<organism>
    <name type="scientific">Bradyrhizobium diazoefficiens (strain JCM 10833 / BCRC 13528 / IAM 13628 / NBRC 14792 / USDA 110)</name>
    <dbReference type="NCBI Taxonomy" id="224911"/>
    <lineage>
        <taxon>Bacteria</taxon>
        <taxon>Pseudomonadati</taxon>
        <taxon>Pseudomonadota</taxon>
        <taxon>Alphaproteobacteria</taxon>
        <taxon>Hyphomicrobiales</taxon>
        <taxon>Nitrobacteraceae</taxon>
        <taxon>Bradyrhizobium</taxon>
    </lineage>
</organism>
<keyword id="KW-0067">ATP-binding</keyword>
<keyword id="KW-0436">Ligase</keyword>
<keyword id="KW-0547">Nucleotide-binding</keyword>
<keyword id="KW-0648">Protein biosynthesis</keyword>
<keyword id="KW-1185">Reference proteome</keyword>
<accession>Q89K31</accession>
<sequence>MSTATHKLLKGATGDWEMVIGMEIHAQVTSNSKLFSGASTAFGGEPNSHVSLVDVAMPGMLPVINEECVRQAVRTGLGLNAKINLRSVFDRKNYFYPDLPQGYQISQYKSPVVGEGEVLVELDGGRSVTVGIERLHIEQDPGKMLHDQSPSLSLIDFNRCGVALMEIVSKPDIRDAEQAKAYVTKLRSIMRYLGTCDGDMEKGNLRADVNVSVRKPGGPLGTRCEIKNMNSINFIGQAIEYEARRQIEILEDGGQIEQETRRFDPDKGETRSMRSKEEAHDYRYFPDPDLLPLEFSQEFVDELKAKLPELPDQKKTRFVADFGLSAYDASVLVAERESAVFYETVLDKLGDRARDGKMAANWVINELFGRLNKEGRDITGSPVTAEQLAAIIDLIGEGTISGKIAKDLFEIVWQEGGDPRALVESRGMKQVTDLSAIEKVVDDIIAANPDKAAQVKDKPQSLGWFVGQVMKASGGKANPQSVNELLKSKLGI</sequence>
<comment type="function">
    <text evidence="1">Allows the formation of correctly charged Asn-tRNA(Asn) or Gln-tRNA(Gln) through the transamidation of misacylated Asp-tRNA(Asn) or Glu-tRNA(Gln) in organisms which lack either or both of asparaginyl-tRNA or glutaminyl-tRNA synthetases. The reaction takes place in the presence of glutamine and ATP through an activated phospho-Asp-tRNA(Asn) or phospho-Glu-tRNA(Gln).</text>
</comment>
<comment type="catalytic activity">
    <reaction evidence="1">
        <text>L-glutamyl-tRNA(Gln) + L-glutamine + ATP + H2O = L-glutaminyl-tRNA(Gln) + L-glutamate + ADP + phosphate + H(+)</text>
        <dbReference type="Rhea" id="RHEA:17521"/>
        <dbReference type="Rhea" id="RHEA-COMP:9681"/>
        <dbReference type="Rhea" id="RHEA-COMP:9684"/>
        <dbReference type="ChEBI" id="CHEBI:15377"/>
        <dbReference type="ChEBI" id="CHEBI:15378"/>
        <dbReference type="ChEBI" id="CHEBI:29985"/>
        <dbReference type="ChEBI" id="CHEBI:30616"/>
        <dbReference type="ChEBI" id="CHEBI:43474"/>
        <dbReference type="ChEBI" id="CHEBI:58359"/>
        <dbReference type="ChEBI" id="CHEBI:78520"/>
        <dbReference type="ChEBI" id="CHEBI:78521"/>
        <dbReference type="ChEBI" id="CHEBI:456216"/>
    </reaction>
</comment>
<comment type="catalytic activity">
    <reaction evidence="1">
        <text>L-aspartyl-tRNA(Asn) + L-glutamine + ATP + H2O = L-asparaginyl-tRNA(Asn) + L-glutamate + ADP + phosphate + 2 H(+)</text>
        <dbReference type="Rhea" id="RHEA:14513"/>
        <dbReference type="Rhea" id="RHEA-COMP:9674"/>
        <dbReference type="Rhea" id="RHEA-COMP:9677"/>
        <dbReference type="ChEBI" id="CHEBI:15377"/>
        <dbReference type="ChEBI" id="CHEBI:15378"/>
        <dbReference type="ChEBI" id="CHEBI:29985"/>
        <dbReference type="ChEBI" id="CHEBI:30616"/>
        <dbReference type="ChEBI" id="CHEBI:43474"/>
        <dbReference type="ChEBI" id="CHEBI:58359"/>
        <dbReference type="ChEBI" id="CHEBI:78515"/>
        <dbReference type="ChEBI" id="CHEBI:78516"/>
        <dbReference type="ChEBI" id="CHEBI:456216"/>
    </reaction>
</comment>
<comment type="subunit">
    <text evidence="1">Heterotrimer of A, B and C subunits.</text>
</comment>
<comment type="similarity">
    <text evidence="1">Belongs to the GatB/GatE family. GatB subfamily.</text>
</comment>
<feature type="chain" id="PRO_0000148769" description="Aspartyl/glutamyl-tRNA(Asn/Gln) amidotransferase subunit B">
    <location>
        <begin position="1"/>
        <end position="492"/>
    </location>
</feature>
<name>GATB_BRADU</name>
<reference key="1">
    <citation type="journal article" date="2002" name="DNA Res.">
        <title>Complete genomic sequence of nitrogen-fixing symbiotic bacterium Bradyrhizobium japonicum USDA110.</title>
        <authorList>
            <person name="Kaneko T."/>
            <person name="Nakamura Y."/>
            <person name="Sato S."/>
            <person name="Minamisawa K."/>
            <person name="Uchiumi T."/>
            <person name="Sasamoto S."/>
            <person name="Watanabe A."/>
            <person name="Idesawa K."/>
            <person name="Iriguchi M."/>
            <person name="Kawashima K."/>
            <person name="Kohara M."/>
            <person name="Matsumoto M."/>
            <person name="Shimpo S."/>
            <person name="Tsuruoka H."/>
            <person name="Wada T."/>
            <person name="Yamada M."/>
            <person name="Tabata S."/>
        </authorList>
    </citation>
    <scope>NUCLEOTIDE SEQUENCE [LARGE SCALE GENOMIC DNA]</scope>
    <source>
        <strain>JCM 10833 / BCRC 13528 / IAM 13628 / NBRC 14792 / USDA 110</strain>
    </source>
</reference>